<reference key="1">
    <citation type="journal article" date="1984" name="Nature">
        <title>DNA sequence and expression of the B95-8 Epstein-Barr virus genome.</title>
        <authorList>
            <person name="Baer R."/>
            <person name="Bankier A.T."/>
            <person name="Biggin M.D."/>
            <person name="Deininger P.L."/>
            <person name="Farrell P.J."/>
            <person name="Gibson T.J."/>
            <person name="Hatfull G."/>
            <person name="Hudson G.S."/>
            <person name="Satchwell S.C."/>
            <person name="Seguin C."/>
            <person name="Tuffnell P.S."/>
            <person name="Barrell B.G."/>
        </authorList>
    </citation>
    <scope>NUCLEOTIDE SEQUENCE [LARGE SCALE GENOMIC DNA]</scope>
</reference>
<reference key="2">
    <citation type="journal article" date="2003" name="Virology">
        <title>Updated Epstein-Barr virus (EBV) DNA sequence and analysis of a promoter for the BART (CST, BARF0) RNAs of EBV.</title>
        <authorList>
            <person name="de Jesus O."/>
            <person name="Smith P.R."/>
            <person name="Spender L.C."/>
            <person name="Elgueta Karstegl C."/>
            <person name="Niller H.H."/>
            <person name="Huang D."/>
            <person name="Farrell P.J."/>
        </authorList>
    </citation>
    <scope>GENOME REANNOTATION</scope>
</reference>
<reference key="3">
    <citation type="journal article" date="1996" name="Virology">
        <title>Epstein-Barr virus single-stranded DNA-binding protein: purification, characterization, and action on DNA synthesis by the viral DNA polymerase.</title>
        <authorList>
            <person name="Tsurumi T."/>
            <person name="Kobayashi A."/>
            <person name="Tamai K."/>
            <person name="Yamada H."/>
            <person name="Daikoku T."/>
            <person name="Yamashita Y."/>
            <person name="Nishiyama Y."/>
        </authorList>
    </citation>
    <scope>FUNCTION</scope>
</reference>
<reference key="4">
    <citation type="journal article" date="1997" name="Virology">
        <title>A major DNA binding protein encoded by BALF2 open reading frame of Epstein-Barr virus (EBV) forms a complex with other EBV DNA-binding proteins: DNAase, EA-D, and DNA polymerase.</title>
        <authorList>
            <person name="Zeng Y."/>
            <person name="Middeldorp J."/>
            <person name="Madjar J.J."/>
            <person name="Ooka T."/>
        </authorList>
    </citation>
    <scope>INTERACTION WITH BALF5; BMRF1 AND BGLF5</scope>
</reference>
<reference key="5">
    <citation type="journal article" date="2004" name="Proc. Natl. Acad. Sci. U.S.A.">
        <title>Proteins of purified Epstein-Barr virus.</title>
        <authorList>
            <person name="Johannsen E."/>
            <person name="Luftig M."/>
            <person name="Chase M.R."/>
            <person name="Weicksel S."/>
            <person name="Cahir-McFarland E."/>
            <person name="Illanes D."/>
            <person name="Sarracino D."/>
            <person name="Kieff E."/>
        </authorList>
    </citation>
    <scope>SUBCELLULAR LOCATION</scope>
</reference>
<reference key="6">
    <citation type="journal article" date="2005" name="J. Virol.">
        <title>Architecture of replication compartments formed during Epstein-Barr virus lytic replication.</title>
        <authorList>
            <person name="Daikoku T."/>
            <person name="Kudoh A."/>
            <person name="Fujita M."/>
            <person name="Sugaya Y."/>
            <person name="Isomura H."/>
            <person name="Shirata N."/>
            <person name="Tsurumi T."/>
        </authorList>
    </citation>
    <scope>SUBCELLULAR LOCATION</scope>
</reference>
<proteinExistence type="evidence at protein level"/>
<comment type="function">
    <text evidence="1 5">Plays several crucial roles in viral infection. Participates in the opening of the viral DNA origin to initiate replication by interacting with the origin-binding protein. May disrupt loops, hairpins and other secondary structures present on ssDNA to reduce and eliminate pausing of viral DNA polymerase at specific sites during elongation. Promotes viral DNA recombination by performing strand-transfer, characterized by the ability to transfer a DNA strand from a linear duplex to a complementary single-stranded DNA circle. Can also catalyze the renaturation of complementary single strands. Additionally, reorganizes the host cell nucleus, leading to the formation of prereplicative sites and replication compartments. This process is driven by the protein which can form double-helical filaments in the absence of DNA.</text>
</comment>
<comment type="subunit">
    <text evidence="1 4">Homooligomers. Forms double-helical filaments necessary for the formation of replication compartments within the host nucleus. Interacts with the origin-binding protein. Interacts with the helicase primase complex; this interaction stimulates primer synthesis activity of the helicase-primase complex. Interacts with the DNA polymerase. Interacts with the alkaline exonuclease; this interaction increases its nuclease processivity.</text>
</comment>
<comment type="subcellular location">
    <subcellularLocation>
        <location evidence="2">Virion tegument</location>
    </subcellularLocation>
    <subcellularLocation>
        <location evidence="1 3">Host nucleus</location>
    </subcellularLocation>
    <text evidence="1">In the absence of DNA replication, found in the nuclear framework-associated structures (prereplicative sites). As viral DNA replication proceeds, it migrates to globular intranuclear structures (replication compartments).</text>
</comment>
<comment type="similarity">
    <text evidence="1">Belongs to the herpesviridae major DNA-binding protein family.</text>
</comment>
<keyword id="KW-0235">DNA replication</keyword>
<keyword id="KW-0238">DNA-binding</keyword>
<keyword id="KW-1048">Host nucleus</keyword>
<keyword id="KW-1185">Reference proteome</keyword>
<keyword id="KW-0946">Virion</keyword>
<keyword id="KW-0920">Virion tegument</keyword>
<name>DNBI_EBVB9</name>
<protein>
    <recommendedName>
        <fullName evidence="1">Major DNA-binding protein</fullName>
    </recommendedName>
</protein>
<feature type="chain" id="PRO_0000115758" description="Major DNA-binding protein">
    <location>
        <begin position="1"/>
        <end position="1128"/>
    </location>
</feature>
<feature type="region of interest" description="Required for nuclear localization" evidence="1">
    <location>
        <begin position="1104"/>
        <end position="1128"/>
    </location>
</feature>
<sequence>MQGAQTSEDNLGSQSQPGPCGYIYFYPLATYPLREVATLGTGYAGHRCLTVPLLCGITVEPGFSINVKALHRRPDPNCGLLRATSYHRDIYVFHNAHMVPPIFEGPGLEALCGETREVFGYDAYSALPRESSKPGDFFPEGLDPSAYLGAVAITEAFKERLYSGNLVAIPSLKQEVAVGQSASVRVPLYDKEVFPEGVPQLRQFYNSDLSRCMHEALYTGLAQALRVRRVGKLVELLEKQSLQDQAKVAKVAPLKEFPASTISHPDSGALMIVDSAACELAVSYAPAMLEASHETPASLNYDSWPLFADCEGPEARVAALHRYNASLAPHVSTQIFATNSVLYVSGVSKSTGQGKESLFNSFYMTHGLGTLQEGTWDPCRRPCFSGWGGPDVTGTNGPGNYAVEHLVYAASFSPNLLARYAYYLQFCQGQKSSLTPVPETGSYVAGAAASPMCSLCEGRAPAVCLNTLFFRLRDRFPPVMSTQRRDPYVISGASGSYNETDFLGNFLNFIDKEDDGQRPDDEPRYTYWQLNQNLLERLSRLGIDAEGKLEKEPHGPRDFVKMFKDVDAAVDAEVVQFMNSMAKNNITYKDLVKSCYHVMQYSCNPFAQPACPIFTQLFYRSLLTILQDISLPICMCYENDNPGLGQSPPEWLKGHYQTLCTNFRSLAIDKGVLTAKEAKVVHGEPTCDLPDLDAALQGRVYGRRLPVRMSKVLMLCPRNIKIKNRVVFTGENAALQNSFIKSTTRRENYIINGPYMKFLNTYHKTLFPDTKLSSLYLWHNFSRRRSVPVPSGASAEEYSDLALFVDGGSRAHEESNVIDVVPGNLVTYAKQRLNNAILKACGQTQFYISLIQGLVPRTQSVPARDYPHVLGTRAVESAAAYAEATSSLTATTVVCAATDCLSQVCKARPVVTLPVTINKYTGVNGNNQIFQAGNLGYFMGRGVDRNLLQAPGAGLRKQAGGSSMRKKFVFATPTLGLTVKRRTQAATTYEIENIRAGLEAIISQKQEEDCVFDVVCNLVDAMGEACASLTRDDAEYLLGRFSVLADSVLETLATIASSGIEWTAEAARDFLEGVWGGPGAAQDNFISVAEPVSTASQASAGLLLGGGGQGSGGRRKRRLATVLPGLEV</sequence>
<dbReference type="EMBL" id="V01555">
    <property type="protein sequence ID" value="CAA24808.1"/>
    <property type="molecule type" value="Genomic_DNA"/>
</dbReference>
<dbReference type="EMBL" id="AJ507799">
    <property type="protein sequence ID" value="CAD53467.1"/>
    <property type="molecule type" value="Genomic_DNA"/>
</dbReference>
<dbReference type="PIR" id="A43045">
    <property type="entry name" value="QQBE47"/>
</dbReference>
<dbReference type="RefSeq" id="YP_401717.1">
    <property type="nucleotide sequence ID" value="NC_007605.1"/>
</dbReference>
<dbReference type="SMR" id="P03227"/>
<dbReference type="IntAct" id="P03227">
    <property type="interactions" value="8"/>
</dbReference>
<dbReference type="MINT" id="P03227"/>
<dbReference type="DNASU" id="3783678"/>
<dbReference type="GeneID" id="3783678"/>
<dbReference type="KEGG" id="vg:3783678"/>
<dbReference type="Proteomes" id="UP000153037">
    <property type="component" value="Segment"/>
</dbReference>
<dbReference type="GO" id="GO:0042025">
    <property type="term" value="C:host cell nucleus"/>
    <property type="evidence" value="ECO:0007669"/>
    <property type="project" value="UniProtKB-SubCell"/>
</dbReference>
<dbReference type="GO" id="GO:0019033">
    <property type="term" value="C:viral tegument"/>
    <property type="evidence" value="ECO:0007669"/>
    <property type="project" value="UniProtKB-SubCell"/>
</dbReference>
<dbReference type="GO" id="GO:0003697">
    <property type="term" value="F:single-stranded DNA binding"/>
    <property type="evidence" value="ECO:0007669"/>
    <property type="project" value="InterPro"/>
</dbReference>
<dbReference type="GO" id="GO:0039686">
    <property type="term" value="P:bidirectional double-stranded viral DNA replication"/>
    <property type="evidence" value="ECO:0000314"/>
    <property type="project" value="UniProtKB"/>
</dbReference>
<dbReference type="GO" id="GO:0006260">
    <property type="term" value="P:DNA replication"/>
    <property type="evidence" value="ECO:0007669"/>
    <property type="project" value="UniProtKB-KW"/>
</dbReference>
<dbReference type="FunFam" id="1.20.190.40:FF:000003">
    <property type="entry name" value="Major DNA-binding protein"/>
    <property type="match status" value="1"/>
</dbReference>
<dbReference type="FunFam" id="1.20.190.40:FF:000004">
    <property type="entry name" value="Major DNA-binding protein"/>
    <property type="match status" value="1"/>
</dbReference>
<dbReference type="Gene3D" id="1.20.190.40">
    <property type="entry name" value="Viral ssDNA binding protein, head domain"/>
    <property type="match status" value="2"/>
</dbReference>
<dbReference type="HAMAP" id="MF_04007">
    <property type="entry name" value="HSV_DNBI"/>
    <property type="match status" value="1"/>
</dbReference>
<dbReference type="InterPro" id="IPR035989">
    <property type="entry name" value="DBP_sf"/>
</dbReference>
<dbReference type="InterPro" id="IPR043031">
    <property type="entry name" value="Viral_ssDBP_head"/>
</dbReference>
<dbReference type="InterPro" id="IPR000635">
    <property type="entry name" value="Viral_ssDNA-bd"/>
</dbReference>
<dbReference type="Pfam" id="PF00747">
    <property type="entry name" value="Viral_DNA_bp"/>
    <property type="match status" value="1"/>
</dbReference>
<dbReference type="SUPFAM" id="SSF118208">
    <property type="entry name" value="Viral ssDNA binding protein"/>
    <property type="match status" value="1"/>
</dbReference>
<organismHost>
    <name type="scientific">Homo sapiens</name>
    <name type="common">Human</name>
    <dbReference type="NCBI Taxonomy" id="9606"/>
</organismHost>
<gene>
    <name evidence="1" type="primary">DBP</name>
    <name type="ORF">BALF2</name>
</gene>
<accession>P03227</accession>
<accession>Q777A7</accession>
<evidence type="ECO:0000255" key="1">
    <source>
        <dbReference type="HAMAP-Rule" id="MF_04007"/>
    </source>
</evidence>
<evidence type="ECO:0000269" key="2">
    <source>
    </source>
</evidence>
<evidence type="ECO:0000269" key="3">
    <source>
    </source>
</evidence>
<evidence type="ECO:0000269" key="4">
    <source>
    </source>
</evidence>
<evidence type="ECO:0000269" key="5">
    <source>
    </source>
</evidence>
<organism>
    <name type="scientific">Epstein-Barr virus (strain B95-8)</name>
    <name type="common">HHV-4</name>
    <name type="synonym">Human herpesvirus 4</name>
    <dbReference type="NCBI Taxonomy" id="10377"/>
    <lineage>
        <taxon>Viruses</taxon>
        <taxon>Duplodnaviria</taxon>
        <taxon>Heunggongvirae</taxon>
        <taxon>Peploviricota</taxon>
        <taxon>Herviviricetes</taxon>
        <taxon>Herpesvirales</taxon>
        <taxon>Orthoherpesviridae</taxon>
        <taxon>Gammaherpesvirinae</taxon>
        <taxon>Lymphocryptovirus</taxon>
        <taxon>Lymphocryptovirus humangamma4</taxon>
        <taxon>Epstein-Barr virus (strain GD1)</taxon>
    </lineage>
</organism>